<gene>
    <name evidence="1" type="primary">rlmN</name>
    <name type="ordered locus">HI_0365</name>
</gene>
<dbReference type="EC" id="2.1.1.192" evidence="1"/>
<dbReference type="EMBL" id="L42023">
    <property type="protein sequence ID" value="AAC22023.1"/>
    <property type="molecule type" value="Genomic_DNA"/>
</dbReference>
<dbReference type="PIR" id="I64149">
    <property type="entry name" value="I64149"/>
</dbReference>
<dbReference type="RefSeq" id="NP_438526.1">
    <property type="nucleotide sequence ID" value="NC_000907.1"/>
</dbReference>
<dbReference type="SMR" id="P44665"/>
<dbReference type="STRING" id="71421.HI_0365"/>
<dbReference type="EnsemblBacteria" id="AAC22023">
    <property type="protein sequence ID" value="AAC22023"/>
    <property type="gene ID" value="HI_0365"/>
</dbReference>
<dbReference type="KEGG" id="hin:HI_0365"/>
<dbReference type="PATRIC" id="fig|71421.8.peg.383"/>
<dbReference type="eggNOG" id="COG0820">
    <property type="taxonomic scope" value="Bacteria"/>
</dbReference>
<dbReference type="HOGENOM" id="CLU_029101_0_0_6"/>
<dbReference type="OrthoDB" id="9793973at2"/>
<dbReference type="PhylomeDB" id="P44665"/>
<dbReference type="BioCyc" id="HINF71421:G1GJ1-378-MONOMER"/>
<dbReference type="Proteomes" id="UP000000579">
    <property type="component" value="Chromosome"/>
</dbReference>
<dbReference type="GO" id="GO:0005737">
    <property type="term" value="C:cytoplasm"/>
    <property type="evidence" value="ECO:0007669"/>
    <property type="project" value="UniProtKB-SubCell"/>
</dbReference>
<dbReference type="GO" id="GO:0051539">
    <property type="term" value="F:4 iron, 4 sulfur cluster binding"/>
    <property type="evidence" value="ECO:0007669"/>
    <property type="project" value="UniProtKB-UniRule"/>
</dbReference>
<dbReference type="GO" id="GO:0046872">
    <property type="term" value="F:metal ion binding"/>
    <property type="evidence" value="ECO:0007669"/>
    <property type="project" value="UniProtKB-KW"/>
</dbReference>
<dbReference type="GO" id="GO:0070040">
    <property type="term" value="F:rRNA (adenine(2503)-C2-)-methyltransferase activity"/>
    <property type="evidence" value="ECO:0007669"/>
    <property type="project" value="UniProtKB-UniRule"/>
</dbReference>
<dbReference type="GO" id="GO:0019843">
    <property type="term" value="F:rRNA binding"/>
    <property type="evidence" value="ECO:0007669"/>
    <property type="project" value="UniProtKB-UniRule"/>
</dbReference>
<dbReference type="GO" id="GO:0002935">
    <property type="term" value="F:tRNA (adenine(37)-C2)-methyltransferase activity"/>
    <property type="evidence" value="ECO:0007669"/>
    <property type="project" value="UniProtKB-UniRule"/>
</dbReference>
<dbReference type="GO" id="GO:0000049">
    <property type="term" value="F:tRNA binding"/>
    <property type="evidence" value="ECO:0007669"/>
    <property type="project" value="UniProtKB-UniRule"/>
</dbReference>
<dbReference type="GO" id="GO:0070475">
    <property type="term" value="P:rRNA base methylation"/>
    <property type="evidence" value="ECO:0000318"/>
    <property type="project" value="GO_Central"/>
</dbReference>
<dbReference type="GO" id="GO:0030488">
    <property type="term" value="P:tRNA methylation"/>
    <property type="evidence" value="ECO:0000318"/>
    <property type="project" value="GO_Central"/>
</dbReference>
<dbReference type="CDD" id="cd01335">
    <property type="entry name" value="Radical_SAM"/>
    <property type="match status" value="1"/>
</dbReference>
<dbReference type="FunFam" id="1.10.150.530:FF:000003">
    <property type="entry name" value="Dual-specificity RNA methyltransferase RlmN"/>
    <property type="match status" value="1"/>
</dbReference>
<dbReference type="FunFam" id="3.20.20.70:FF:000008">
    <property type="entry name" value="Dual-specificity RNA methyltransferase RlmN"/>
    <property type="match status" value="1"/>
</dbReference>
<dbReference type="Gene3D" id="1.10.150.530">
    <property type="match status" value="1"/>
</dbReference>
<dbReference type="Gene3D" id="3.20.20.70">
    <property type="entry name" value="Aldolase class I"/>
    <property type="match status" value="1"/>
</dbReference>
<dbReference type="HAMAP" id="MF_01849">
    <property type="entry name" value="RNA_methyltr_RlmN"/>
    <property type="match status" value="1"/>
</dbReference>
<dbReference type="InterPro" id="IPR013785">
    <property type="entry name" value="Aldolase_TIM"/>
</dbReference>
<dbReference type="InterPro" id="IPR040072">
    <property type="entry name" value="Methyltransferase_A"/>
</dbReference>
<dbReference type="InterPro" id="IPR048641">
    <property type="entry name" value="RlmN_N"/>
</dbReference>
<dbReference type="InterPro" id="IPR027492">
    <property type="entry name" value="RNA_MTrfase_RlmN"/>
</dbReference>
<dbReference type="InterPro" id="IPR004383">
    <property type="entry name" value="rRNA_lsu_MTrfase_RlmN/Cfr"/>
</dbReference>
<dbReference type="InterPro" id="IPR007197">
    <property type="entry name" value="rSAM"/>
</dbReference>
<dbReference type="NCBIfam" id="NF008396">
    <property type="entry name" value="PRK11194.1"/>
    <property type="match status" value="1"/>
</dbReference>
<dbReference type="NCBIfam" id="TIGR00048">
    <property type="entry name" value="rRNA_mod_RlmN"/>
    <property type="match status" value="1"/>
</dbReference>
<dbReference type="PANTHER" id="PTHR30544">
    <property type="entry name" value="23S RRNA METHYLTRANSFERASE"/>
    <property type="match status" value="1"/>
</dbReference>
<dbReference type="PANTHER" id="PTHR30544:SF5">
    <property type="entry name" value="RADICAL SAM CORE DOMAIN-CONTAINING PROTEIN"/>
    <property type="match status" value="1"/>
</dbReference>
<dbReference type="Pfam" id="PF04055">
    <property type="entry name" value="Radical_SAM"/>
    <property type="match status" value="1"/>
</dbReference>
<dbReference type="Pfam" id="PF21016">
    <property type="entry name" value="RlmN_N"/>
    <property type="match status" value="1"/>
</dbReference>
<dbReference type="PIRSF" id="PIRSF006004">
    <property type="entry name" value="CHP00048"/>
    <property type="match status" value="1"/>
</dbReference>
<dbReference type="SFLD" id="SFLDF00275">
    <property type="entry name" value="adenosine_C2_methyltransferase"/>
    <property type="match status" value="1"/>
</dbReference>
<dbReference type="SFLD" id="SFLDS00029">
    <property type="entry name" value="Radical_SAM"/>
    <property type="match status" value="1"/>
</dbReference>
<dbReference type="SUPFAM" id="SSF102114">
    <property type="entry name" value="Radical SAM enzymes"/>
    <property type="match status" value="1"/>
</dbReference>
<dbReference type="PROSITE" id="PS51918">
    <property type="entry name" value="RADICAL_SAM"/>
    <property type="match status" value="1"/>
</dbReference>
<accession>P44665</accession>
<keyword id="KW-0004">4Fe-4S</keyword>
<keyword id="KW-0963">Cytoplasm</keyword>
<keyword id="KW-1015">Disulfide bond</keyword>
<keyword id="KW-0408">Iron</keyword>
<keyword id="KW-0411">Iron-sulfur</keyword>
<keyword id="KW-0479">Metal-binding</keyword>
<keyword id="KW-0489">Methyltransferase</keyword>
<keyword id="KW-1185">Reference proteome</keyword>
<keyword id="KW-0698">rRNA processing</keyword>
<keyword id="KW-0949">S-adenosyl-L-methionine</keyword>
<keyword id="KW-0808">Transferase</keyword>
<keyword id="KW-0819">tRNA processing</keyword>
<name>RLMN_HAEIN</name>
<organism>
    <name type="scientific">Haemophilus influenzae (strain ATCC 51907 / DSM 11121 / KW20 / Rd)</name>
    <dbReference type="NCBI Taxonomy" id="71421"/>
    <lineage>
        <taxon>Bacteria</taxon>
        <taxon>Pseudomonadati</taxon>
        <taxon>Pseudomonadota</taxon>
        <taxon>Gammaproteobacteria</taxon>
        <taxon>Pasteurellales</taxon>
        <taxon>Pasteurellaceae</taxon>
        <taxon>Haemophilus</taxon>
    </lineage>
</organism>
<protein>
    <recommendedName>
        <fullName evidence="1">Dual-specificity RNA methyltransferase RlmN</fullName>
        <ecNumber evidence="1">2.1.1.192</ecNumber>
    </recommendedName>
    <alternativeName>
        <fullName evidence="1">23S rRNA (adenine(2503)-C(2))-methyltransferase</fullName>
    </alternativeName>
    <alternativeName>
        <fullName evidence="1">23S rRNA m2A2503 methyltransferase</fullName>
    </alternativeName>
    <alternativeName>
        <fullName evidence="1">Ribosomal RNA large subunit methyltransferase N</fullName>
    </alternativeName>
    <alternativeName>
        <fullName evidence="1">tRNA (adenine(37)-C(2))-methyltransferase</fullName>
    </alternativeName>
    <alternativeName>
        <fullName evidence="1">tRNA m2A37 methyltransferase</fullName>
    </alternativeName>
</protein>
<evidence type="ECO:0000255" key="1">
    <source>
        <dbReference type="HAMAP-Rule" id="MF_01849"/>
    </source>
</evidence>
<evidence type="ECO:0000255" key="2">
    <source>
        <dbReference type="PROSITE-ProRule" id="PRU01266"/>
    </source>
</evidence>
<proteinExistence type="inferred from homology"/>
<comment type="function">
    <text evidence="1">Specifically methylates position 2 of adenine 2503 in 23S rRNA and position 2 of adenine 37 in tRNAs. m2A2503 modification seems to play a crucial role in the proofreading step occurring at the peptidyl transferase center and thus would serve to optimize ribosomal fidelity.</text>
</comment>
<comment type="catalytic activity">
    <reaction evidence="1">
        <text>adenosine(2503) in 23S rRNA + 2 reduced [2Fe-2S]-[ferredoxin] + 2 S-adenosyl-L-methionine = 2-methyladenosine(2503) in 23S rRNA + 5'-deoxyadenosine + L-methionine + 2 oxidized [2Fe-2S]-[ferredoxin] + S-adenosyl-L-homocysteine</text>
        <dbReference type="Rhea" id="RHEA:42916"/>
        <dbReference type="Rhea" id="RHEA-COMP:10000"/>
        <dbReference type="Rhea" id="RHEA-COMP:10001"/>
        <dbReference type="Rhea" id="RHEA-COMP:10152"/>
        <dbReference type="Rhea" id="RHEA-COMP:10282"/>
        <dbReference type="ChEBI" id="CHEBI:17319"/>
        <dbReference type="ChEBI" id="CHEBI:33737"/>
        <dbReference type="ChEBI" id="CHEBI:33738"/>
        <dbReference type="ChEBI" id="CHEBI:57844"/>
        <dbReference type="ChEBI" id="CHEBI:57856"/>
        <dbReference type="ChEBI" id="CHEBI:59789"/>
        <dbReference type="ChEBI" id="CHEBI:74411"/>
        <dbReference type="ChEBI" id="CHEBI:74497"/>
        <dbReference type="EC" id="2.1.1.192"/>
    </reaction>
</comment>
<comment type="catalytic activity">
    <reaction evidence="1">
        <text>adenosine(37) in tRNA + 2 reduced [2Fe-2S]-[ferredoxin] + 2 S-adenosyl-L-methionine = 2-methyladenosine(37) in tRNA + 5'-deoxyadenosine + L-methionine + 2 oxidized [2Fe-2S]-[ferredoxin] + S-adenosyl-L-homocysteine</text>
        <dbReference type="Rhea" id="RHEA:43332"/>
        <dbReference type="Rhea" id="RHEA-COMP:10000"/>
        <dbReference type="Rhea" id="RHEA-COMP:10001"/>
        <dbReference type="Rhea" id="RHEA-COMP:10162"/>
        <dbReference type="Rhea" id="RHEA-COMP:10485"/>
        <dbReference type="ChEBI" id="CHEBI:17319"/>
        <dbReference type="ChEBI" id="CHEBI:33737"/>
        <dbReference type="ChEBI" id="CHEBI:33738"/>
        <dbReference type="ChEBI" id="CHEBI:57844"/>
        <dbReference type="ChEBI" id="CHEBI:57856"/>
        <dbReference type="ChEBI" id="CHEBI:59789"/>
        <dbReference type="ChEBI" id="CHEBI:74411"/>
        <dbReference type="ChEBI" id="CHEBI:74497"/>
        <dbReference type="EC" id="2.1.1.192"/>
    </reaction>
</comment>
<comment type="cofactor">
    <cofactor evidence="1">
        <name>[4Fe-4S] cluster</name>
        <dbReference type="ChEBI" id="CHEBI:49883"/>
    </cofactor>
    <text evidence="1">Binds 1 [4Fe-4S] cluster. The cluster is coordinated with 3 cysteines and an exchangeable S-adenosyl-L-methionine.</text>
</comment>
<comment type="subcellular location">
    <subcellularLocation>
        <location evidence="1">Cytoplasm</location>
    </subcellularLocation>
</comment>
<comment type="miscellaneous">
    <text evidence="1">Reaction proceeds by a ping-pong mechanism involving intermediate methylation of a conserved cysteine residue.</text>
</comment>
<comment type="similarity">
    <text evidence="1">Belongs to the radical SAM superfamily. RlmN family.</text>
</comment>
<feature type="chain" id="PRO_0000171920" description="Dual-specificity RNA methyltransferase RlmN">
    <location>
        <begin position="1"/>
        <end position="390"/>
    </location>
</feature>
<feature type="domain" description="Radical SAM core" evidence="2">
    <location>
        <begin position="116"/>
        <end position="355"/>
    </location>
</feature>
<feature type="active site" description="Proton acceptor" evidence="1">
    <location>
        <position position="110"/>
    </location>
</feature>
<feature type="active site" description="S-methylcysteine intermediate" evidence="1">
    <location>
        <position position="360"/>
    </location>
</feature>
<feature type="binding site" evidence="1">
    <location>
        <position position="130"/>
    </location>
    <ligand>
        <name>[4Fe-4S] cluster</name>
        <dbReference type="ChEBI" id="CHEBI:49883"/>
        <note>4Fe-4S-S-AdoMet</note>
    </ligand>
</feature>
<feature type="binding site" evidence="1">
    <location>
        <position position="134"/>
    </location>
    <ligand>
        <name>[4Fe-4S] cluster</name>
        <dbReference type="ChEBI" id="CHEBI:49883"/>
        <note>4Fe-4S-S-AdoMet</note>
    </ligand>
</feature>
<feature type="binding site" evidence="1">
    <location>
        <position position="137"/>
    </location>
    <ligand>
        <name>[4Fe-4S] cluster</name>
        <dbReference type="ChEBI" id="CHEBI:49883"/>
        <note>4Fe-4S-S-AdoMet</note>
    </ligand>
</feature>
<feature type="binding site" evidence="1">
    <location>
        <begin position="184"/>
        <end position="185"/>
    </location>
    <ligand>
        <name>S-adenosyl-L-methionine</name>
        <dbReference type="ChEBI" id="CHEBI:59789"/>
    </ligand>
</feature>
<feature type="binding site" evidence="1">
    <location>
        <position position="216"/>
    </location>
    <ligand>
        <name>S-adenosyl-L-methionine</name>
        <dbReference type="ChEBI" id="CHEBI:59789"/>
    </ligand>
</feature>
<feature type="binding site" evidence="1">
    <location>
        <begin position="238"/>
        <end position="240"/>
    </location>
    <ligand>
        <name>S-adenosyl-L-methionine</name>
        <dbReference type="ChEBI" id="CHEBI:59789"/>
    </ligand>
</feature>
<feature type="binding site" evidence="1">
    <location>
        <position position="317"/>
    </location>
    <ligand>
        <name>S-adenosyl-L-methionine</name>
        <dbReference type="ChEBI" id="CHEBI:59789"/>
    </ligand>
</feature>
<feature type="disulfide bond" description="(transient)" evidence="1">
    <location>
        <begin position="123"/>
        <end position="360"/>
    </location>
</feature>
<sequence>MCNNEAKMSELLSVQSDAPAKKINLMDLTRQQMREFFKELGEKPFRADQLVKWIYHFGEDNFDNMTNINKKLREKLKAVAEIKAPEVAVEQRSADGTIKWAMQVGEQQVETVYIPEADRATLCVSSQVGCALACTFCSTAQQGFNRNLTVSEIIGQVWRASKIIGNFGVTGVRPITNVVMMGMGEPLLNVANVVPAMEIMLDDFAYGLSKRRVTLSTSGVVPALDNLSKMIDVALAISLHAPNDELRDEIVPINKKYNIKTLIDSVNRYLNVSNANHGKVTIEYVMLDHVNDGVEHAHQLAEVLKNTPCKINLIPWNPFPEAPYAKSSNTRIDRFQKTLMEYDFTVIIRKTRGDDIDAACGQLAGDVIDRTKRTAMKRQFGQNIGVTEVN</sequence>
<reference key="1">
    <citation type="journal article" date="1995" name="Science">
        <title>Whole-genome random sequencing and assembly of Haemophilus influenzae Rd.</title>
        <authorList>
            <person name="Fleischmann R.D."/>
            <person name="Adams M.D."/>
            <person name="White O."/>
            <person name="Clayton R.A."/>
            <person name="Kirkness E.F."/>
            <person name="Kerlavage A.R."/>
            <person name="Bult C.J."/>
            <person name="Tomb J.-F."/>
            <person name="Dougherty B.A."/>
            <person name="Merrick J.M."/>
            <person name="McKenney K."/>
            <person name="Sutton G.G."/>
            <person name="FitzHugh W."/>
            <person name="Fields C.A."/>
            <person name="Gocayne J.D."/>
            <person name="Scott J.D."/>
            <person name="Shirley R."/>
            <person name="Liu L.-I."/>
            <person name="Glodek A."/>
            <person name="Kelley J.M."/>
            <person name="Weidman J.F."/>
            <person name="Phillips C.A."/>
            <person name="Spriggs T."/>
            <person name="Hedblom E."/>
            <person name="Cotton M.D."/>
            <person name="Utterback T.R."/>
            <person name="Hanna M.C."/>
            <person name="Nguyen D.T."/>
            <person name="Saudek D.M."/>
            <person name="Brandon R.C."/>
            <person name="Fine L.D."/>
            <person name="Fritchman J.L."/>
            <person name="Fuhrmann J.L."/>
            <person name="Geoghagen N.S.M."/>
            <person name="Gnehm C.L."/>
            <person name="McDonald L.A."/>
            <person name="Small K.V."/>
            <person name="Fraser C.M."/>
            <person name="Smith H.O."/>
            <person name="Venter J.C."/>
        </authorList>
    </citation>
    <scope>NUCLEOTIDE SEQUENCE [LARGE SCALE GENOMIC DNA]</scope>
    <source>
        <strain>ATCC 51907 / DSM 11121 / KW20 / Rd</strain>
    </source>
</reference>